<reference key="1">
    <citation type="journal article" date="2006" name="J. Bacteriol.">
        <title>Pathogenomic sequence analysis of Bacillus cereus and Bacillus thuringiensis isolates closely related to Bacillus anthracis.</title>
        <authorList>
            <person name="Han C.S."/>
            <person name="Xie G."/>
            <person name="Challacombe J.F."/>
            <person name="Altherr M.R."/>
            <person name="Bhotika S.S."/>
            <person name="Bruce D."/>
            <person name="Campbell C.S."/>
            <person name="Campbell M.L."/>
            <person name="Chen J."/>
            <person name="Chertkov O."/>
            <person name="Cleland C."/>
            <person name="Dimitrijevic M."/>
            <person name="Doggett N.A."/>
            <person name="Fawcett J.J."/>
            <person name="Glavina T."/>
            <person name="Goodwin L.A."/>
            <person name="Hill K.K."/>
            <person name="Hitchcock P."/>
            <person name="Jackson P.J."/>
            <person name="Keim P."/>
            <person name="Kewalramani A.R."/>
            <person name="Longmire J."/>
            <person name="Lucas S."/>
            <person name="Malfatti S."/>
            <person name="McMurry K."/>
            <person name="Meincke L.J."/>
            <person name="Misra M."/>
            <person name="Moseman B.L."/>
            <person name="Mundt M."/>
            <person name="Munk A.C."/>
            <person name="Okinaka R.T."/>
            <person name="Parson-Quintana B."/>
            <person name="Reilly L.P."/>
            <person name="Richardson P."/>
            <person name="Robinson D.L."/>
            <person name="Rubin E."/>
            <person name="Saunders E."/>
            <person name="Tapia R."/>
            <person name="Tesmer J.G."/>
            <person name="Thayer N."/>
            <person name="Thompson L.S."/>
            <person name="Tice H."/>
            <person name="Ticknor L.O."/>
            <person name="Wills P.L."/>
            <person name="Brettin T.S."/>
            <person name="Gilna P."/>
        </authorList>
    </citation>
    <scope>NUCLEOTIDE SEQUENCE [LARGE SCALE GENOMIC DNA]</scope>
    <source>
        <strain>ZK / E33L</strain>
    </source>
</reference>
<keyword id="KW-0028">Amino-acid biosynthesis</keyword>
<keyword id="KW-0032">Aminotransferase</keyword>
<keyword id="KW-0368">Histidine biosynthesis</keyword>
<keyword id="KW-0663">Pyridoxal phosphate</keyword>
<keyword id="KW-0808">Transferase</keyword>
<feature type="chain" id="PRO_0000153304" description="Histidinol-phosphate aminotransferase 2">
    <location>
        <begin position="1"/>
        <end position="366"/>
    </location>
</feature>
<feature type="region of interest" description="Disordered" evidence="2">
    <location>
        <begin position="1"/>
        <end position="21"/>
    </location>
</feature>
<feature type="modified residue" description="N6-(pyridoxal phosphate)lysine" evidence="1">
    <location>
        <position position="222"/>
    </location>
</feature>
<sequence>MQVKDQLSLLQPYKPGKSPEQMKEVYGDHSFVKLASNENSFGCSPRVLDELQKSWLDHALYPDGGATTLRQTIANKLHVQMEQVLCGSGLDEVIQIISRAVLKAGDNIVTAGATFPQYRHHAIIEGCEVKEVALNNGVYDLDEISSVVDNNTKIVWICNPNNPTGTYVNDRKLTQFIEGISENTLIVIDEAYYEYVTAKDFPETLPLLEKHKNILVLRTFSKAYGLASFRVGYAVGHEELIEKLNVVRLPFNVSSLAQKAATIAFGDDEFIEEIVRVNTEGLRQYESFCKENEIPFYQSQTNFIFLPVENGGEIYEACAHAGFIIRPFPNGVRITVGTREQNEGVISVLQQHFENKKRKSRDEANV</sequence>
<organism>
    <name type="scientific">Bacillus cereus (strain ZK / E33L)</name>
    <dbReference type="NCBI Taxonomy" id="288681"/>
    <lineage>
        <taxon>Bacteria</taxon>
        <taxon>Bacillati</taxon>
        <taxon>Bacillota</taxon>
        <taxon>Bacilli</taxon>
        <taxon>Bacillales</taxon>
        <taxon>Bacillaceae</taxon>
        <taxon>Bacillus</taxon>
        <taxon>Bacillus cereus group</taxon>
    </lineage>
</organism>
<evidence type="ECO:0000255" key="1">
    <source>
        <dbReference type="HAMAP-Rule" id="MF_01023"/>
    </source>
</evidence>
<evidence type="ECO:0000256" key="2">
    <source>
        <dbReference type="SAM" id="MobiDB-lite"/>
    </source>
</evidence>
<accession>Q63A05</accession>
<gene>
    <name evidence="1" type="primary">hisC2</name>
    <name type="ordered locus">BCE33L2675</name>
</gene>
<protein>
    <recommendedName>
        <fullName evidence="1">Histidinol-phosphate aminotransferase 2</fullName>
        <ecNumber evidence="1">2.6.1.9</ecNumber>
    </recommendedName>
    <alternativeName>
        <fullName evidence="1">Imidazole acetol-phosphate transaminase 2</fullName>
    </alternativeName>
</protein>
<comment type="catalytic activity">
    <reaction evidence="1">
        <text>L-histidinol phosphate + 2-oxoglutarate = 3-(imidazol-4-yl)-2-oxopropyl phosphate + L-glutamate</text>
        <dbReference type="Rhea" id="RHEA:23744"/>
        <dbReference type="ChEBI" id="CHEBI:16810"/>
        <dbReference type="ChEBI" id="CHEBI:29985"/>
        <dbReference type="ChEBI" id="CHEBI:57766"/>
        <dbReference type="ChEBI" id="CHEBI:57980"/>
        <dbReference type="EC" id="2.6.1.9"/>
    </reaction>
</comment>
<comment type="cofactor">
    <cofactor evidence="1">
        <name>pyridoxal 5'-phosphate</name>
        <dbReference type="ChEBI" id="CHEBI:597326"/>
    </cofactor>
</comment>
<comment type="pathway">
    <text evidence="1">Amino-acid biosynthesis; L-histidine biosynthesis; L-histidine from 5-phospho-alpha-D-ribose 1-diphosphate: step 7/9.</text>
</comment>
<comment type="subunit">
    <text evidence="1">Homodimer.</text>
</comment>
<comment type="similarity">
    <text evidence="1">Belongs to the class-II pyridoxal-phosphate-dependent aminotransferase family. Histidinol-phosphate aminotransferase subfamily.</text>
</comment>
<name>HIS82_BACCZ</name>
<dbReference type="EC" id="2.6.1.9" evidence="1"/>
<dbReference type="EMBL" id="CP000001">
    <property type="protein sequence ID" value="AAU17586.1"/>
    <property type="molecule type" value="Genomic_DNA"/>
</dbReference>
<dbReference type="RefSeq" id="WP_001197234.1">
    <property type="nucleotide sequence ID" value="NC_006274.1"/>
</dbReference>
<dbReference type="SMR" id="Q63A05"/>
<dbReference type="KEGG" id="bcz:BCE33L2675"/>
<dbReference type="PATRIC" id="fig|288681.22.peg.2788"/>
<dbReference type="UniPathway" id="UPA00031">
    <property type="reaction ID" value="UER00012"/>
</dbReference>
<dbReference type="Proteomes" id="UP000002612">
    <property type="component" value="Chromosome"/>
</dbReference>
<dbReference type="GO" id="GO:0004400">
    <property type="term" value="F:histidinol-phosphate transaminase activity"/>
    <property type="evidence" value="ECO:0007669"/>
    <property type="project" value="UniProtKB-UniRule"/>
</dbReference>
<dbReference type="GO" id="GO:0030170">
    <property type="term" value="F:pyridoxal phosphate binding"/>
    <property type="evidence" value="ECO:0007669"/>
    <property type="project" value="InterPro"/>
</dbReference>
<dbReference type="GO" id="GO:0000105">
    <property type="term" value="P:L-histidine biosynthetic process"/>
    <property type="evidence" value="ECO:0007669"/>
    <property type="project" value="UniProtKB-UniRule"/>
</dbReference>
<dbReference type="CDD" id="cd00609">
    <property type="entry name" value="AAT_like"/>
    <property type="match status" value="1"/>
</dbReference>
<dbReference type="Gene3D" id="3.90.1150.10">
    <property type="entry name" value="Aspartate Aminotransferase, domain 1"/>
    <property type="match status" value="1"/>
</dbReference>
<dbReference type="Gene3D" id="3.40.640.10">
    <property type="entry name" value="Type I PLP-dependent aspartate aminotransferase-like (Major domain)"/>
    <property type="match status" value="1"/>
</dbReference>
<dbReference type="HAMAP" id="MF_01023">
    <property type="entry name" value="HisC_aminotrans_2"/>
    <property type="match status" value="1"/>
</dbReference>
<dbReference type="InterPro" id="IPR001917">
    <property type="entry name" value="Aminotrans_II_pyridoxalP_BS"/>
</dbReference>
<dbReference type="InterPro" id="IPR004839">
    <property type="entry name" value="Aminotransferase_I/II_large"/>
</dbReference>
<dbReference type="InterPro" id="IPR005861">
    <property type="entry name" value="HisP_aminotrans"/>
</dbReference>
<dbReference type="InterPro" id="IPR050106">
    <property type="entry name" value="HistidinolP_aminotransfase"/>
</dbReference>
<dbReference type="InterPro" id="IPR015424">
    <property type="entry name" value="PyrdxlP-dep_Trfase"/>
</dbReference>
<dbReference type="InterPro" id="IPR015421">
    <property type="entry name" value="PyrdxlP-dep_Trfase_major"/>
</dbReference>
<dbReference type="InterPro" id="IPR015422">
    <property type="entry name" value="PyrdxlP-dep_Trfase_small"/>
</dbReference>
<dbReference type="NCBIfam" id="TIGR01141">
    <property type="entry name" value="hisC"/>
    <property type="match status" value="1"/>
</dbReference>
<dbReference type="PANTHER" id="PTHR43643:SF3">
    <property type="entry name" value="HISTIDINOL-PHOSPHATE AMINOTRANSFERASE"/>
    <property type="match status" value="1"/>
</dbReference>
<dbReference type="PANTHER" id="PTHR43643">
    <property type="entry name" value="HISTIDINOL-PHOSPHATE AMINOTRANSFERASE 2"/>
    <property type="match status" value="1"/>
</dbReference>
<dbReference type="Pfam" id="PF00155">
    <property type="entry name" value="Aminotran_1_2"/>
    <property type="match status" value="1"/>
</dbReference>
<dbReference type="SUPFAM" id="SSF53383">
    <property type="entry name" value="PLP-dependent transferases"/>
    <property type="match status" value="1"/>
</dbReference>
<dbReference type="PROSITE" id="PS00599">
    <property type="entry name" value="AA_TRANSFER_CLASS_2"/>
    <property type="match status" value="1"/>
</dbReference>
<proteinExistence type="inferred from homology"/>